<sequence length="498" mass="55383">MSRNGAKYRDLRDFIARLEAEGELRRIGASVDPNLEITEICDRTLKSEGPALLFEHPKGSAVPLLGNLFGTPRRVALGMGEVSVGALRQVGVLLASLKEPEPPKGMRDAFEKVPLYRQVLHMAPKEVRNAPCQQEVLRGSDIDLGRYPIQTCWPGDAGPLITWPLVITRGPYKARQNLGIYRQQVIGRNKTIMRWLAHRGGALDFRDWQEARPGEPFPVAVALGADPATMLGAVTPVPDTLSEYGFAGLLRGARTEVTPCILSDLQVPASAEIVLEGFLYPGETAPEGPFGDHTGYYNEVESFPVFTIECITQRHSPIYHSTYTGRPPDEPAVLGVALNEVFVPILQKQFPEVVDFYLPPEGCSYRLAVVSMKKQYAGHAKRVMFGVWSFLRQFMYTKFVIVVDDDVDARNWKDVVWAMTTRMDPARDLTLIENTPIDYLDFASPVSGLGSKVGFDATHKWPGETNREWGRPITMDAAVRRRVDEIWDSLGIFAGSRG</sequence>
<feature type="chain" id="PRO_0000267672" description="3-octaprenyl-4-hydroxybenzoate carboxy-lyase">
    <location>
        <begin position="1"/>
        <end position="498"/>
    </location>
</feature>
<feature type="active site" description="Proton donor" evidence="1">
    <location>
        <position position="292"/>
    </location>
</feature>
<feature type="binding site" evidence="1">
    <location>
        <position position="177"/>
    </location>
    <ligand>
        <name>Mn(2+)</name>
        <dbReference type="ChEBI" id="CHEBI:29035"/>
    </ligand>
</feature>
<feature type="binding site" evidence="1">
    <location>
        <begin position="180"/>
        <end position="182"/>
    </location>
    <ligand>
        <name>prenylated FMN</name>
        <dbReference type="ChEBI" id="CHEBI:87746"/>
    </ligand>
</feature>
<feature type="binding site" evidence="1">
    <location>
        <begin position="194"/>
        <end position="196"/>
    </location>
    <ligand>
        <name>prenylated FMN</name>
        <dbReference type="ChEBI" id="CHEBI:87746"/>
    </ligand>
</feature>
<feature type="binding site" evidence="1">
    <location>
        <begin position="199"/>
        <end position="200"/>
    </location>
    <ligand>
        <name>prenylated FMN</name>
        <dbReference type="ChEBI" id="CHEBI:87746"/>
    </ligand>
</feature>
<feature type="binding site" evidence="1">
    <location>
        <position position="243"/>
    </location>
    <ligand>
        <name>Mn(2+)</name>
        <dbReference type="ChEBI" id="CHEBI:29035"/>
    </ligand>
</feature>
<protein>
    <recommendedName>
        <fullName evidence="1">3-octaprenyl-4-hydroxybenzoate carboxy-lyase</fullName>
        <ecNumber evidence="1">4.1.1.98</ecNumber>
    </recommendedName>
    <alternativeName>
        <fullName evidence="1">Polyprenyl p-hydroxybenzoate decarboxylase</fullName>
    </alternativeName>
</protein>
<dbReference type="EC" id="4.1.1.98" evidence="1"/>
<dbReference type="EMBL" id="AE017282">
    <property type="protein sequence ID" value="AAU90855.1"/>
    <property type="molecule type" value="Genomic_DNA"/>
</dbReference>
<dbReference type="RefSeq" id="WP_010962247.1">
    <property type="nucleotide sequence ID" value="NC_002977.6"/>
</dbReference>
<dbReference type="SMR" id="Q602K0"/>
<dbReference type="STRING" id="243233.MCA3063"/>
<dbReference type="GeneID" id="88225222"/>
<dbReference type="KEGG" id="mca:MCA3063"/>
<dbReference type="eggNOG" id="COG0043">
    <property type="taxonomic scope" value="Bacteria"/>
</dbReference>
<dbReference type="HOGENOM" id="CLU_023348_4_1_6"/>
<dbReference type="UniPathway" id="UPA00232"/>
<dbReference type="Proteomes" id="UP000006821">
    <property type="component" value="Chromosome"/>
</dbReference>
<dbReference type="GO" id="GO:0005829">
    <property type="term" value="C:cytosol"/>
    <property type="evidence" value="ECO:0007669"/>
    <property type="project" value="TreeGrafter"/>
</dbReference>
<dbReference type="GO" id="GO:0005886">
    <property type="term" value="C:plasma membrane"/>
    <property type="evidence" value="ECO:0007669"/>
    <property type="project" value="UniProtKB-SubCell"/>
</dbReference>
<dbReference type="GO" id="GO:0008694">
    <property type="term" value="F:3-octaprenyl-4-hydroxybenzoate carboxy-lyase activity"/>
    <property type="evidence" value="ECO:0007669"/>
    <property type="project" value="UniProtKB-UniRule"/>
</dbReference>
<dbReference type="GO" id="GO:0046872">
    <property type="term" value="F:metal ion binding"/>
    <property type="evidence" value="ECO:0007669"/>
    <property type="project" value="UniProtKB-KW"/>
</dbReference>
<dbReference type="GO" id="GO:0006744">
    <property type="term" value="P:ubiquinone biosynthetic process"/>
    <property type="evidence" value="ECO:0007669"/>
    <property type="project" value="UniProtKB-UniRule"/>
</dbReference>
<dbReference type="FunFam" id="1.20.5.570:FF:000001">
    <property type="entry name" value="3-octaprenyl-4-hydroxybenzoate carboxy-lyase"/>
    <property type="match status" value="1"/>
</dbReference>
<dbReference type="FunFam" id="3.40.1670.10:FF:000001">
    <property type="entry name" value="3-octaprenyl-4-hydroxybenzoate carboxy-lyase"/>
    <property type="match status" value="1"/>
</dbReference>
<dbReference type="Gene3D" id="1.20.5.570">
    <property type="entry name" value="Single helix bin"/>
    <property type="match status" value="1"/>
</dbReference>
<dbReference type="Gene3D" id="3.40.1670.10">
    <property type="entry name" value="UbiD C-terminal domain-like"/>
    <property type="match status" value="1"/>
</dbReference>
<dbReference type="HAMAP" id="MF_01636">
    <property type="entry name" value="UbiD"/>
    <property type="match status" value="1"/>
</dbReference>
<dbReference type="InterPro" id="IPR018486">
    <property type="entry name" value="Hemopexin_CS"/>
</dbReference>
<dbReference type="InterPro" id="IPR002830">
    <property type="entry name" value="UbiD"/>
</dbReference>
<dbReference type="InterPro" id="IPR049381">
    <property type="entry name" value="UbiD-like_C"/>
</dbReference>
<dbReference type="InterPro" id="IPR049383">
    <property type="entry name" value="UbiD-like_N"/>
</dbReference>
<dbReference type="InterPro" id="IPR023677">
    <property type="entry name" value="UbiD_bacteria"/>
</dbReference>
<dbReference type="InterPro" id="IPR048304">
    <property type="entry name" value="UbiD_Rift_dom"/>
</dbReference>
<dbReference type="NCBIfam" id="NF008175">
    <property type="entry name" value="PRK10922.1"/>
    <property type="match status" value="1"/>
</dbReference>
<dbReference type="NCBIfam" id="TIGR00148">
    <property type="entry name" value="UbiD family decarboxylase"/>
    <property type="match status" value="1"/>
</dbReference>
<dbReference type="PANTHER" id="PTHR30108">
    <property type="entry name" value="3-OCTAPRENYL-4-HYDROXYBENZOATE CARBOXY-LYASE-RELATED"/>
    <property type="match status" value="1"/>
</dbReference>
<dbReference type="PANTHER" id="PTHR30108:SF17">
    <property type="entry name" value="FERULIC ACID DECARBOXYLASE 1"/>
    <property type="match status" value="1"/>
</dbReference>
<dbReference type="Pfam" id="PF01977">
    <property type="entry name" value="UbiD"/>
    <property type="match status" value="1"/>
</dbReference>
<dbReference type="Pfam" id="PF20696">
    <property type="entry name" value="UbiD_C"/>
    <property type="match status" value="1"/>
</dbReference>
<dbReference type="Pfam" id="PF20695">
    <property type="entry name" value="UbiD_N"/>
    <property type="match status" value="1"/>
</dbReference>
<dbReference type="SUPFAM" id="SSF50475">
    <property type="entry name" value="FMN-binding split barrel"/>
    <property type="match status" value="1"/>
</dbReference>
<dbReference type="SUPFAM" id="SSF143968">
    <property type="entry name" value="UbiD C-terminal domain-like"/>
    <property type="match status" value="1"/>
</dbReference>
<evidence type="ECO:0000255" key="1">
    <source>
        <dbReference type="HAMAP-Rule" id="MF_01636"/>
    </source>
</evidence>
<proteinExistence type="inferred from homology"/>
<name>UBID_METCA</name>
<keyword id="KW-1003">Cell membrane</keyword>
<keyword id="KW-0210">Decarboxylase</keyword>
<keyword id="KW-0285">Flavoprotein</keyword>
<keyword id="KW-0288">FMN</keyword>
<keyword id="KW-0456">Lyase</keyword>
<keyword id="KW-0464">Manganese</keyword>
<keyword id="KW-0472">Membrane</keyword>
<keyword id="KW-0479">Metal-binding</keyword>
<keyword id="KW-1185">Reference proteome</keyword>
<keyword id="KW-0831">Ubiquinone biosynthesis</keyword>
<organism>
    <name type="scientific">Methylococcus capsulatus (strain ATCC 33009 / NCIMB 11132 / Bath)</name>
    <dbReference type="NCBI Taxonomy" id="243233"/>
    <lineage>
        <taxon>Bacteria</taxon>
        <taxon>Pseudomonadati</taxon>
        <taxon>Pseudomonadota</taxon>
        <taxon>Gammaproteobacteria</taxon>
        <taxon>Methylococcales</taxon>
        <taxon>Methylococcaceae</taxon>
        <taxon>Methylococcus</taxon>
    </lineage>
</organism>
<gene>
    <name evidence="1" type="primary">ubiD</name>
    <name type="ordered locus">MCA3063</name>
</gene>
<accession>Q602K0</accession>
<reference key="1">
    <citation type="journal article" date="2004" name="PLoS Biol.">
        <title>Genomic insights into methanotrophy: the complete genome sequence of Methylococcus capsulatus (Bath).</title>
        <authorList>
            <person name="Ward N.L."/>
            <person name="Larsen O."/>
            <person name="Sakwa J."/>
            <person name="Bruseth L."/>
            <person name="Khouri H.M."/>
            <person name="Durkin A.S."/>
            <person name="Dimitrov G."/>
            <person name="Jiang L."/>
            <person name="Scanlan D."/>
            <person name="Kang K.H."/>
            <person name="Lewis M.R."/>
            <person name="Nelson K.E."/>
            <person name="Methe B.A."/>
            <person name="Wu M."/>
            <person name="Heidelberg J.F."/>
            <person name="Paulsen I.T."/>
            <person name="Fouts D.E."/>
            <person name="Ravel J."/>
            <person name="Tettelin H."/>
            <person name="Ren Q."/>
            <person name="Read T.D."/>
            <person name="DeBoy R.T."/>
            <person name="Seshadri R."/>
            <person name="Salzberg S.L."/>
            <person name="Jensen H.B."/>
            <person name="Birkeland N.K."/>
            <person name="Nelson W.C."/>
            <person name="Dodson R.J."/>
            <person name="Grindhaug S.H."/>
            <person name="Holt I.E."/>
            <person name="Eidhammer I."/>
            <person name="Jonasen I."/>
            <person name="Vanaken S."/>
            <person name="Utterback T.R."/>
            <person name="Feldblyum T.V."/>
            <person name="Fraser C.M."/>
            <person name="Lillehaug J.R."/>
            <person name="Eisen J.A."/>
        </authorList>
    </citation>
    <scope>NUCLEOTIDE SEQUENCE [LARGE SCALE GENOMIC DNA]</scope>
    <source>
        <strain>ATCC 33009 / NCIMB 11132 / Bath</strain>
    </source>
</reference>
<comment type="function">
    <text evidence="1">Catalyzes the decarboxylation of 3-octaprenyl-4-hydroxy benzoate to 2-octaprenylphenol, an intermediate step in ubiquinone biosynthesis.</text>
</comment>
<comment type="catalytic activity">
    <reaction evidence="1">
        <text>a 4-hydroxy-3-(all-trans-polyprenyl)benzoate + H(+) = a 2-(all-trans-polyprenyl)phenol + CO2</text>
        <dbReference type="Rhea" id="RHEA:41680"/>
        <dbReference type="Rhea" id="RHEA-COMP:9514"/>
        <dbReference type="Rhea" id="RHEA-COMP:9516"/>
        <dbReference type="ChEBI" id="CHEBI:1269"/>
        <dbReference type="ChEBI" id="CHEBI:15378"/>
        <dbReference type="ChEBI" id="CHEBI:16526"/>
        <dbReference type="ChEBI" id="CHEBI:78396"/>
        <dbReference type="EC" id="4.1.1.98"/>
    </reaction>
</comment>
<comment type="cofactor">
    <cofactor evidence="1">
        <name>prenylated FMN</name>
        <dbReference type="ChEBI" id="CHEBI:87746"/>
    </cofactor>
    <text evidence="1">Binds 1 prenylated FMN per subunit.</text>
</comment>
<comment type="cofactor">
    <cofactor evidence="1">
        <name>Mn(2+)</name>
        <dbReference type="ChEBI" id="CHEBI:29035"/>
    </cofactor>
</comment>
<comment type="pathway">
    <text evidence="1">Cofactor biosynthesis; ubiquinone biosynthesis.</text>
</comment>
<comment type="subunit">
    <text evidence="1">Homohexamer.</text>
</comment>
<comment type="subcellular location">
    <subcellularLocation>
        <location evidence="1">Cell membrane</location>
        <topology evidence="1">Peripheral membrane protein</topology>
    </subcellularLocation>
</comment>
<comment type="similarity">
    <text evidence="1">Belongs to the UbiD family.</text>
</comment>